<reference key="1">
    <citation type="journal article" date="2007" name="PLoS Genet.">
        <title>The complete genome sequence of Yersinia pseudotuberculosis IP31758, the causative agent of Far East scarlet-like fever.</title>
        <authorList>
            <person name="Eppinger M."/>
            <person name="Rosovitz M.J."/>
            <person name="Fricke W.F."/>
            <person name="Rasko D.A."/>
            <person name="Kokorina G."/>
            <person name="Fayolle C."/>
            <person name="Lindler L.E."/>
            <person name="Carniel E."/>
            <person name="Ravel J."/>
        </authorList>
    </citation>
    <scope>NUCLEOTIDE SEQUENCE [LARGE SCALE GENOMIC DNA]</scope>
    <source>
        <strain>IP 31758</strain>
    </source>
</reference>
<accession>A7FJ89</accession>
<name>AC4CH_YERP3</name>
<organism>
    <name type="scientific">Yersinia pseudotuberculosis serotype O:1b (strain IP 31758)</name>
    <dbReference type="NCBI Taxonomy" id="349747"/>
    <lineage>
        <taxon>Bacteria</taxon>
        <taxon>Pseudomonadati</taxon>
        <taxon>Pseudomonadota</taxon>
        <taxon>Gammaproteobacteria</taxon>
        <taxon>Enterobacterales</taxon>
        <taxon>Yersiniaceae</taxon>
        <taxon>Yersinia</taxon>
    </lineage>
</organism>
<evidence type="ECO:0000255" key="1"/>
<evidence type="ECO:0000255" key="2">
    <source>
        <dbReference type="HAMAP-Rule" id="MF_00684"/>
    </source>
</evidence>
<keyword id="KW-0378">Hydrolase</keyword>
<gene>
    <name type="ordered locus">YpsIP31758_2348</name>
</gene>
<comment type="function">
    <text evidence="2">Catalyzes the hydrolysis of N(4)-acetylcytidine (ac4C).</text>
</comment>
<comment type="catalytic activity">
    <reaction evidence="2">
        <text>N(4)-acetylcytidine + H2O = cytidine + acetate + H(+)</text>
        <dbReference type="Rhea" id="RHEA:62932"/>
        <dbReference type="ChEBI" id="CHEBI:15377"/>
        <dbReference type="ChEBI" id="CHEBI:15378"/>
        <dbReference type="ChEBI" id="CHEBI:17562"/>
        <dbReference type="ChEBI" id="CHEBI:30089"/>
        <dbReference type="ChEBI" id="CHEBI:70989"/>
        <dbReference type="EC" id="3.5.1.135"/>
    </reaction>
</comment>
<comment type="catalytic activity">
    <reaction evidence="2">
        <text>N(4)-acetyl-2'-deoxycytidine + H2O = 2'-deoxycytidine + acetate + H(+)</text>
        <dbReference type="Rhea" id="RHEA:62936"/>
        <dbReference type="ChEBI" id="CHEBI:15377"/>
        <dbReference type="ChEBI" id="CHEBI:15378"/>
        <dbReference type="ChEBI" id="CHEBI:15698"/>
        <dbReference type="ChEBI" id="CHEBI:30089"/>
        <dbReference type="ChEBI" id="CHEBI:146133"/>
        <dbReference type="EC" id="3.5.1.135"/>
    </reaction>
</comment>
<comment type="catalytic activity">
    <reaction evidence="2">
        <text>N(4)-acetylcytosine + H2O = cytosine + acetate + H(+)</text>
        <dbReference type="Rhea" id="RHEA:62940"/>
        <dbReference type="ChEBI" id="CHEBI:15377"/>
        <dbReference type="ChEBI" id="CHEBI:15378"/>
        <dbReference type="ChEBI" id="CHEBI:16040"/>
        <dbReference type="ChEBI" id="CHEBI:30089"/>
        <dbReference type="ChEBI" id="CHEBI:146134"/>
        <dbReference type="EC" id="3.5.1.135"/>
    </reaction>
</comment>
<comment type="similarity">
    <text evidence="2">Belongs to the N(4)-acetylcytidine amidohydrolase family.</text>
</comment>
<protein>
    <recommendedName>
        <fullName evidence="2">N(4)-acetylcytidine amidohydrolase</fullName>
        <shortName evidence="2">ac4C amidohydrolase</shortName>
        <ecNumber evidence="2">3.5.1.135</ecNumber>
    </recommendedName>
</protein>
<proteinExistence type="inferred from homology"/>
<sequence>MNREITFFGRFEADILADRKTITIRDSSESDFRSGEVLRVCRNEDGVFFCHIKVKSVTPVTLDGLSERHAEQENMSLDELKKVIKAIYPGLDRFYVIEFTRC</sequence>
<dbReference type="EC" id="3.5.1.135" evidence="2"/>
<dbReference type="EMBL" id="CP000720">
    <property type="protein sequence ID" value="ABS47453.1"/>
    <property type="molecule type" value="Genomic_DNA"/>
</dbReference>
<dbReference type="SMR" id="A7FJ89"/>
<dbReference type="KEGG" id="ypi:YpsIP31758_2348"/>
<dbReference type="HOGENOM" id="CLU_152586_0_0_6"/>
<dbReference type="Proteomes" id="UP000002412">
    <property type="component" value="Chromosome"/>
</dbReference>
<dbReference type="GO" id="GO:0005829">
    <property type="term" value="C:cytosol"/>
    <property type="evidence" value="ECO:0007669"/>
    <property type="project" value="TreeGrafter"/>
</dbReference>
<dbReference type="GO" id="GO:0016813">
    <property type="term" value="F:hydrolase activity, acting on carbon-nitrogen (but not peptide) bonds, in linear amidines"/>
    <property type="evidence" value="ECO:0007669"/>
    <property type="project" value="UniProtKB-UniRule"/>
</dbReference>
<dbReference type="GO" id="GO:0106251">
    <property type="term" value="F:N4-acetylcytidine amidohydrolase activity"/>
    <property type="evidence" value="ECO:0007669"/>
    <property type="project" value="RHEA"/>
</dbReference>
<dbReference type="CDD" id="cd06552">
    <property type="entry name" value="ASCH_yqfb_like"/>
    <property type="match status" value="1"/>
</dbReference>
<dbReference type="FunFam" id="2.30.130.30:FF:000001">
    <property type="entry name" value="UPF0267 protein YqfB"/>
    <property type="match status" value="1"/>
</dbReference>
<dbReference type="Gene3D" id="2.30.130.30">
    <property type="entry name" value="Hypothetical protein"/>
    <property type="match status" value="1"/>
</dbReference>
<dbReference type="HAMAP" id="MF_00684">
    <property type="entry name" value="ac4C_amidohydr"/>
    <property type="match status" value="1"/>
</dbReference>
<dbReference type="InterPro" id="IPR008314">
    <property type="entry name" value="AC4CH"/>
</dbReference>
<dbReference type="InterPro" id="IPR007374">
    <property type="entry name" value="ASCH_domain"/>
</dbReference>
<dbReference type="InterPro" id="IPR015947">
    <property type="entry name" value="PUA-like_sf"/>
</dbReference>
<dbReference type="NCBIfam" id="NF003443">
    <property type="entry name" value="PRK04980.1"/>
    <property type="match status" value="1"/>
</dbReference>
<dbReference type="PANTHER" id="PTHR38088">
    <property type="entry name" value="UCP029143 FAMILY PROTEIN"/>
    <property type="match status" value="1"/>
</dbReference>
<dbReference type="PANTHER" id="PTHR38088:SF2">
    <property type="entry name" value="UCP029143 FAMILY PROTEIN"/>
    <property type="match status" value="1"/>
</dbReference>
<dbReference type="Pfam" id="PF04266">
    <property type="entry name" value="ASCH"/>
    <property type="match status" value="1"/>
</dbReference>
<dbReference type="PIRSF" id="PIRSF029143">
    <property type="entry name" value="UCP029143"/>
    <property type="match status" value="1"/>
</dbReference>
<dbReference type="SMART" id="SM01022">
    <property type="entry name" value="ASCH"/>
    <property type="match status" value="1"/>
</dbReference>
<dbReference type="SUPFAM" id="SSF88697">
    <property type="entry name" value="PUA domain-like"/>
    <property type="match status" value="1"/>
</dbReference>
<feature type="chain" id="PRO_1000061986" description="N(4)-acetylcytidine amidohydrolase">
    <location>
        <begin position="1"/>
        <end position="102"/>
    </location>
</feature>
<feature type="domain" description="ASCH" evidence="1">
    <location>
        <begin position="6"/>
        <end position="92"/>
    </location>
</feature>
<feature type="active site" description="Proton acceptor" evidence="2">
    <location>
        <position position="20"/>
    </location>
</feature>
<feature type="active site" description="Nucleophile" evidence="2">
    <location>
        <position position="23"/>
    </location>
</feature>
<feature type="active site" description="Proton donor" evidence="2">
    <location>
        <position position="73"/>
    </location>
</feature>